<organism>
    <name type="scientific">Treponema pallidum subsp. pallidum (strain SS14)</name>
    <dbReference type="NCBI Taxonomy" id="455434"/>
    <lineage>
        <taxon>Bacteria</taxon>
        <taxon>Pseudomonadati</taxon>
        <taxon>Spirochaetota</taxon>
        <taxon>Spirochaetia</taxon>
        <taxon>Spirochaetales</taxon>
        <taxon>Treponemataceae</taxon>
        <taxon>Treponema</taxon>
    </lineage>
</organism>
<name>ERA_TREPS</name>
<feature type="chain" id="PRO_1000121366" description="GTPase Era">
    <location>
        <begin position="1"/>
        <end position="319"/>
    </location>
</feature>
<feature type="domain" description="Era-type G" evidence="2">
    <location>
        <begin position="9"/>
        <end position="196"/>
    </location>
</feature>
<feature type="domain" description="KH type-2" evidence="1">
    <location>
        <begin position="227"/>
        <end position="303"/>
    </location>
</feature>
<feature type="region of interest" description="G1" evidence="2">
    <location>
        <begin position="17"/>
        <end position="24"/>
    </location>
</feature>
<feature type="region of interest" description="G2" evidence="2">
    <location>
        <begin position="43"/>
        <end position="47"/>
    </location>
</feature>
<feature type="region of interest" description="G3" evidence="2">
    <location>
        <begin position="64"/>
        <end position="67"/>
    </location>
</feature>
<feature type="region of interest" description="G4" evidence="2">
    <location>
        <begin position="127"/>
        <end position="130"/>
    </location>
</feature>
<feature type="region of interest" description="G5" evidence="2">
    <location>
        <begin position="175"/>
        <end position="177"/>
    </location>
</feature>
<feature type="binding site" evidence="1">
    <location>
        <begin position="17"/>
        <end position="24"/>
    </location>
    <ligand>
        <name>GTP</name>
        <dbReference type="ChEBI" id="CHEBI:37565"/>
    </ligand>
</feature>
<feature type="binding site" evidence="1">
    <location>
        <begin position="64"/>
        <end position="68"/>
    </location>
    <ligand>
        <name>GTP</name>
        <dbReference type="ChEBI" id="CHEBI:37565"/>
    </ligand>
</feature>
<feature type="binding site" evidence="1">
    <location>
        <begin position="127"/>
        <end position="130"/>
    </location>
    <ligand>
        <name>GTP</name>
        <dbReference type="ChEBI" id="CHEBI:37565"/>
    </ligand>
</feature>
<proteinExistence type="inferred from homology"/>
<evidence type="ECO:0000255" key="1">
    <source>
        <dbReference type="HAMAP-Rule" id="MF_00367"/>
    </source>
</evidence>
<evidence type="ECO:0000255" key="2">
    <source>
        <dbReference type="PROSITE-ProRule" id="PRU01050"/>
    </source>
</evidence>
<reference key="1">
    <citation type="journal article" date="2008" name="BMC Microbiol.">
        <title>Complete genome sequence of Treponema pallidum ssp. pallidum strain SS14 determined with oligonucleotide arrays.</title>
        <authorList>
            <person name="Matejkova P."/>
            <person name="Strouhal M."/>
            <person name="Smajs D."/>
            <person name="Norris S.J."/>
            <person name="Palzkill T."/>
            <person name="Petrosino J.F."/>
            <person name="Sodergren E."/>
            <person name="Norton J.E."/>
            <person name="Singh J."/>
            <person name="Richmond T.A."/>
            <person name="Molla M.N."/>
            <person name="Albert T.J."/>
            <person name="Weinstock G.M."/>
        </authorList>
    </citation>
    <scope>NUCLEOTIDE SEQUENCE [LARGE SCALE GENOMIC DNA]</scope>
    <source>
        <strain>SS14</strain>
    </source>
</reference>
<protein>
    <recommendedName>
        <fullName evidence="1">GTPase Era</fullName>
    </recommendedName>
</protein>
<sequence>MVTDGASPRSGVSLIIGRPSSGKSTFLNAVCGYKVSIVSPIPQTTRNTVRGIVNIESDQIVFMDTPGYHRSDRKFNLRLQSLVHSNVKDADVLLYLVDATRQFGEEEAAICALLAPYQKTRVLLAFNKVDVLHNSTSCDEHAFLHRQGSVLRAGSLGRALHAALPHLPADRVFTISALHQVGLDALMRTLRDLLPEAAPLYPQDCYTDQTIAFRVTELIREQAIARCRDELPHALYAGVEDMELRRGKRELWCRAFLAVERESQKAVLVGKKGAVIRAIRLDAIRALRTLLPYHISLDIRVKVDRSWRQRDHTLSSLLY</sequence>
<dbReference type="EMBL" id="CP000805">
    <property type="protein sequence ID" value="ACD70962.1"/>
    <property type="molecule type" value="Genomic_DNA"/>
</dbReference>
<dbReference type="RefSeq" id="WP_010881988.1">
    <property type="nucleotide sequence ID" value="NC_021508.1"/>
</dbReference>
<dbReference type="SMR" id="B2S3D3"/>
<dbReference type="GeneID" id="93876310"/>
<dbReference type="KEGG" id="tpp:TPASS_0541"/>
<dbReference type="PATRIC" id="fig|455434.6.peg.539"/>
<dbReference type="Proteomes" id="UP000001202">
    <property type="component" value="Chromosome"/>
</dbReference>
<dbReference type="GO" id="GO:0005829">
    <property type="term" value="C:cytosol"/>
    <property type="evidence" value="ECO:0007669"/>
    <property type="project" value="TreeGrafter"/>
</dbReference>
<dbReference type="GO" id="GO:0005886">
    <property type="term" value="C:plasma membrane"/>
    <property type="evidence" value="ECO:0007669"/>
    <property type="project" value="UniProtKB-SubCell"/>
</dbReference>
<dbReference type="GO" id="GO:0005525">
    <property type="term" value="F:GTP binding"/>
    <property type="evidence" value="ECO:0007669"/>
    <property type="project" value="UniProtKB-UniRule"/>
</dbReference>
<dbReference type="GO" id="GO:0003924">
    <property type="term" value="F:GTPase activity"/>
    <property type="evidence" value="ECO:0007669"/>
    <property type="project" value="UniProtKB-UniRule"/>
</dbReference>
<dbReference type="GO" id="GO:0043024">
    <property type="term" value="F:ribosomal small subunit binding"/>
    <property type="evidence" value="ECO:0007669"/>
    <property type="project" value="TreeGrafter"/>
</dbReference>
<dbReference type="GO" id="GO:0070181">
    <property type="term" value="F:small ribosomal subunit rRNA binding"/>
    <property type="evidence" value="ECO:0007669"/>
    <property type="project" value="UniProtKB-UniRule"/>
</dbReference>
<dbReference type="GO" id="GO:0000028">
    <property type="term" value="P:ribosomal small subunit assembly"/>
    <property type="evidence" value="ECO:0007669"/>
    <property type="project" value="TreeGrafter"/>
</dbReference>
<dbReference type="CDD" id="cd04163">
    <property type="entry name" value="Era"/>
    <property type="match status" value="1"/>
</dbReference>
<dbReference type="CDD" id="cd22534">
    <property type="entry name" value="KH-II_Era"/>
    <property type="match status" value="1"/>
</dbReference>
<dbReference type="Gene3D" id="3.30.300.20">
    <property type="match status" value="1"/>
</dbReference>
<dbReference type="Gene3D" id="3.40.50.300">
    <property type="entry name" value="P-loop containing nucleotide triphosphate hydrolases"/>
    <property type="match status" value="1"/>
</dbReference>
<dbReference type="HAMAP" id="MF_00367">
    <property type="entry name" value="GTPase_Era"/>
    <property type="match status" value="1"/>
</dbReference>
<dbReference type="InterPro" id="IPR030388">
    <property type="entry name" value="G_ERA_dom"/>
</dbReference>
<dbReference type="InterPro" id="IPR006073">
    <property type="entry name" value="GTP-bd"/>
</dbReference>
<dbReference type="InterPro" id="IPR005662">
    <property type="entry name" value="GTPase_Era-like"/>
</dbReference>
<dbReference type="InterPro" id="IPR015946">
    <property type="entry name" value="KH_dom-like_a/b"/>
</dbReference>
<dbReference type="InterPro" id="IPR004044">
    <property type="entry name" value="KH_dom_type_2"/>
</dbReference>
<dbReference type="InterPro" id="IPR009019">
    <property type="entry name" value="KH_sf_prok-type"/>
</dbReference>
<dbReference type="InterPro" id="IPR027417">
    <property type="entry name" value="P-loop_NTPase"/>
</dbReference>
<dbReference type="InterPro" id="IPR005225">
    <property type="entry name" value="Small_GTP-bd"/>
</dbReference>
<dbReference type="NCBIfam" id="TIGR00436">
    <property type="entry name" value="era"/>
    <property type="match status" value="1"/>
</dbReference>
<dbReference type="NCBIfam" id="NF000908">
    <property type="entry name" value="PRK00089.1"/>
    <property type="match status" value="1"/>
</dbReference>
<dbReference type="NCBIfam" id="TIGR00231">
    <property type="entry name" value="small_GTP"/>
    <property type="match status" value="1"/>
</dbReference>
<dbReference type="PANTHER" id="PTHR42698">
    <property type="entry name" value="GTPASE ERA"/>
    <property type="match status" value="1"/>
</dbReference>
<dbReference type="PANTHER" id="PTHR42698:SF1">
    <property type="entry name" value="GTPASE ERA, MITOCHONDRIAL"/>
    <property type="match status" value="1"/>
</dbReference>
<dbReference type="Pfam" id="PF07650">
    <property type="entry name" value="KH_2"/>
    <property type="match status" value="1"/>
</dbReference>
<dbReference type="Pfam" id="PF01926">
    <property type="entry name" value="MMR_HSR1"/>
    <property type="match status" value="1"/>
</dbReference>
<dbReference type="SUPFAM" id="SSF52540">
    <property type="entry name" value="P-loop containing nucleoside triphosphate hydrolases"/>
    <property type="match status" value="1"/>
</dbReference>
<dbReference type="SUPFAM" id="SSF54814">
    <property type="entry name" value="Prokaryotic type KH domain (KH-domain type II)"/>
    <property type="match status" value="1"/>
</dbReference>
<dbReference type="PROSITE" id="PS51713">
    <property type="entry name" value="G_ERA"/>
    <property type="match status" value="1"/>
</dbReference>
<comment type="function">
    <text evidence="1">An essential GTPase that binds both GDP and GTP, with rapid nucleotide exchange. Plays a role in 16S rRNA processing and 30S ribosomal subunit biogenesis and possibly also in cell cycle regulation and energy metabolism.</text>
</comment>
<comment type="subunit">
    <text evidence="1">Monomer.</text>
</comment>
<comment type="subcellular location">
    <subcellularLocation>
        <location>Cytoplasm</location>
    </subcellularLocation>
    <subcellularLocation>
        <location evidence="1">Cell inner membrane</location>
        <topology evidence="1">Peripheral membrane protein</topology>
    </subcellularLocation>
</comment>
<comment type="similarity">
    <text evidence="1 2">Belongs to the TRAFAC class TrmE-Era-EngA-EngB-Septin-like GTPase superfamily. Era GTPase family.</text>
</comment>
<keyword id="KW-0997">Cell inner membrane</keyword>
<keyword id="KW-1003">Cell membrane</keyword>
<keyword id="KW-0963">Cytoplasm</keyword>
<keyword id="KW-0342">GTP-binding</keyword>
<keyword id="KW-0472">Membrane</keyword>
<keyword id="KW-0547">Nucleotide-binding</keyword>
<keyword id="KW-0690">Ribosome biogenesis</keyword>
<keyword id="KW-0694">RNA-binding</keyword>
<keyword id="KW-0699">rRNA-binding</keyword>
<accession>B2S3D3</accession>
<gene>
    <name evidence="1" type="primary">era</name>
    <name type="ordered locus">TPASS_0541</name>
</gene>